<gene>
    <name type="ordered locus">Rv1747</name>
</gene>
<accession>O65934</accession>
<accession>F2GJI0</accession>
<accession>L0TAH8</accession>
<proteinExistence type="evidence at protein level"/>
<evidence type="ECO:0000255" key="1"/>
<evidence type="ECO:0000255" key="2">
    <source>
        <dbReference type="PROSITE-ProRule" id="PRU00086"/>
    </source>
</evidence>
<evidence type="ECO:0000255" key="3">
    <source>
        <dbReference type="PROSITE-ProRule" id="PRU00434"/>
    </source>
</evidence>
<evidence type="ECO:0000256" key="4">
    <source>
        <dbReference type="SAM" id="MobiDB-lite"/>
    </source>
</evidence>
<evidence type="ECO:0000269" key="5">
    <source>
    </source>
</evidence>
<evidence type="ECO:0000269" key="6">
    <source>
    </source>
</evidence>
<evidence type="ECO:0000269" key="7">
    <source>
    </source>
</evidence>
<evidence type="ECO:0000269" key="8">
    <source>
    </source>
</evidence>
<evidence type="ECO:0000305" key="9"/>
<evidence type="ECO:0007829" key="10">
    <source>
        <dbReference type="PDB" id="6CAH"/>
    </source>
</evidence>
<evidence type="ECO:0007829" key="11">
    <source>
        <dbReference type="PDB" id="6CCD"/>
    </source>
</evidence>
<reference key="1">
    <citation type="journal article" date="1998" name="Nature">
        <title>Deciphering the biology of Mycobacterium tuberculosis from the complete genome sequence.</title>
        <authorList>
            <person name="Cole S.T."/>
            <person name="Brosch R."/>
            <person name="Parkhill J."/>
            <person name="Garnier T."/>
            <person name="Churcher C.M."/>
            <person name="Harris D.E."/>
            <person name="Gordon S.V."/>
            <person name="Eiglmeier K."/>
            <person name="Gas S."/>
            <person name="Barry C.E. III"/>
            <person name="Tekaia F."/>
            <person name="Badcock K."/>
            <person name="Basham D."/>
            <person name="Brown D."/>
            <person name="Chillingworth T."/>
            <person name="Connor R."/>
            <person name="Davies R.M."/>
            <person name="Devlin K."/>
            <person name="Feltwell T."/>
            <person name="Gentles S."/>
            <person name="Hamlin N."/>
            <person name="Holroyd S."/>
            <person name="Hornsby T."/>
            <person name="Jagels K."/>
            <person name="Krogh A."/>
            <person name="McLean J."/>
            <person name="Moule S."/>
            <person name="Murphy L.D."/>
            <person name="Oliver S."/>
            <person name="Osborne J."/>
            <person name="Quail M.A."/>
            <person name="Rajandream M.A."/>
            <person name="Rogers J."/>
            <person name="Rutter S."/>
            <person name="Seeger K."/>
            <person name="Skelton S."/>
            <person name="Squares S."/>
            <person name="Squares R."/>
            <person name="Sulston J.E."/>
            <person name="Taylor K."/>
            <person name="Whitehead S."/>
            <person name="Barrell B.G."/>
        </authorList>
    </citation>
    <scope>NUCLEOTIDE SEQUENCE [LARGE SCALE GENOMIC DNA]</scope>
    <source>
        <strain>ATCC 25618 / H37Rv</strain>
    </source>
</reference>
<reference key="2">
    <citation type="journal article" date="2004" name="FEMS Microbiol. Lett.">
        <title>Two FHA domains on an ABC transporter, Rv1747, mediate its phosphorylation by PknF, a Ser/Thr protein kinase from Mycobacterium tuberculosis.</title>
        <authorList>
            <person name="Molle V."/>
            <person name="Soulat D."/>
            <person name="Jault J.M."/>
            <person name="Grangeasse C."/>
            <person name="Cozzone A.J."/>
            <person name="Prost J.F."/>
        </authorList>
    </citation>
    <scope>FUNCTION</scope>
    <scope>ATPASE ACTIVITY</scope>
    <scope>SUBUNIT</scope>
    <scope>DOMAIN</scope>
    <scope>PHOSPHORYLATION BY PKNF</scope>
    <scope>MUTAGENESIS OF ARG-33; SER-47; ASN-69; ARG-234; SER-248; ASN-270 AND GLU-479</scope>
    <source>
        <strain>ATCC 25618 / H37Rv</strain>
    </source>
</reference>
<reference key="3">
    <citation type="journal article" date="2005" name="Infect. Immun.">
        <title>An ABC transporter containing a forkhead-associated domain interacts with a serine-threonine protein kinase and is required for growth of Mycobacterium tuberculosis in mice.</title>
        <authorList>
            <person name="Curry J.M."/>
            <person name="Whalan R."/>
            <person name="Hunt D.M."/>
            <person name="Gohil K."/>
            <person name="Strom M."/>
            <person name="Rickman L."/>
            <person name="Colston M.J."/>
            <person name="Smerdon S.J."/>
            <person name="Buxton R.S."/>
        </authorList>
    </citation>
    <scope>FUNCTION</scope>
    <scope>SUBUNIT</scope>
    <scope>INTERACTION WITH PKNF</scope>
    <scope>DISRUPTION PHENOTYPE</scope>
    <scope>MUTAGENESIS OF SER-47 AND SER-248</scope>
    <source>
        <strain>ATCC 25618 / H37Rv</strain>
    </source>
</reference>
<reference key="4">
    <citation type="journal article" date="2005" name="Protein Sci.">
        <title>Mycobacterium tuberculosis serine/threonine kinases PknB, PknD, PknE, and PknF phosphorylate multiple FHA domains.</title>
        <authorList>
            <person name="Grundner C."/>
            <person name="Gay L.M."/>
            <person name="Alber T."/>
        </authorList>
    </citation>
    <scope>PHOSPHORYLATION</scope>
</reference>
<reference key="5">
    <citation type="journal article" date="2011" name="J. Biol. Chem.">
        <title>Forkhead-associated (FHA) domain containing ABC transporter Rv1747 is positively regulated by Ser/Thr phosphorylation in Mycobacterium tuberculosis.</title>
        <authorList>
            <person name="Spivey V.L."/>
            <person name="Molle V."/>
            <person name="Whalan R.H."/>
            <person name="Rodgers A."/>
            <person name="Leiba J."/>
            <person name="Stach L."/>
            <person name="Walker K.B."/>
            <person name="Smerdon S.J."/>
            <person name="Buxton R.S."/>
        </authorList>
    </citation>
    <scope>ACTIVITY REGULATION</scope>
    <scope>PHOSPHORYLATION AT THR-152 AND THR-210</scope>
    <scope>MUTAGENESIS OF SER-47; THR-152; THR-210 AND SER-248</scope>
    <source>
        <strain>ATCC 25618 / H37Rv</strain>
    </source>
</reference>
<reference key="6">
    <citation type="journal article" date="2011" name="Mol. Cell. Proteomics">
        <title>Proteogenomic analysis of Mycobacterium tuberculosis by high resolution mass spectrometry.</title>
        <authorList>
            <person name="Kelkar D.S."/>
            <person name="Kumar D."/>
            <person name="Kumar P."/>
            <person name="Balakrishnan L."/>
            <person name="Muthusamy B."/>
            <person name="Yadav A.K."/>
            <person name="Shrivastava P."/>
            <person name="Marimuthu A."/>
            <person name="Anand S."/>
            <person name="Sundaram H."/>
            <person name="Kingsbury R."/>
            <person name="Harsha H.C."/>
            <person name="Nair B."/>
            <person name="Prasad T.S."/>
            <person name="Chauhan D.S."/>
            <person name="Katoch K."/>
            <person name="Katoch V.M."/>
            <person name="Kumar P."/>
            <person name="Chaerkady R."/>
            <person name="Ramachandran S."/>
            <person name="Dash D."/>
            <person name="Pandey A."/>
        </authorList>
    </citation>
    <scope>IDENTIFICATION BY MASS SPECTROMETRY [LARGE SCALE ANALYSIS]</scope>
    <source>
        <strain>ATCC 25618 / H37Rv</strain>
    </source>
</reference>
<comment type="function">
    <text evidence="5 7">Involved in the translocation of an unknown substrate across the membrane. Transmembrane domains (TMD) form a pore in the membrane and the ATP-binding domain (NBD) is responsible for energy generation. Required for virulence.</text>
</comment>
<comment type="activity regulation">
    <text evidence="8">Function is positively regulated by phosphorylation.</text>
</comment>
<comment type="subunit">
    <text evidence="5 7 9">Homodimer (Probable). Interacts with PknF.</text>
</comment>
<comment type="subcellular location">
    <subcellularLocation>
        <location evidence="9">Cell membrane</location>
        <topology evidence="9">Multi-pass membrane protein</topology>
    </subcellularLocation>
</comment>
<comment type="domain">
    <text evidence="5">In Rv1747 the ATP-binding domain (NBD) and the transmembrane domain (TMD) are fused. The two FHA domains are required for phosphorylation by PknF.</text>
</comment>
<comment type="PTM">
    <text evidence="5 6 8">Phosphorylated by PknF. Can probably be phosphorylated in vivo by other kinases when PknF is missing.</text>
</comment>
<comment type="disruption phenotype">
    <text evidence="7">Disruption results in a growth defect in macrophage and mouse infections.</text>
</comment>
<comment type="similarity">
    <text evidence="9">In the central section; belongs to the ABC transporter superfamily.</text>
</comment>
<comment type="similarity">
    <text evidence="9">In the C-terminal section; belongs to the ABC-2 integral membrane protein family.</text>
</comment>
<name>ABC1_MYCTU</name>
<protein>
    <recommendedName>
        <fullName>ABC transporter ATP-binding/permease protein Rv1747</fullName>
        <ecNumber>7.-.-.-</ecNumber>
    </recommendedName>
</protein>
<organism>
    <name type="scientific">Mycobacterium tuberculosis (strain ATCC 25618 / H37Rv)</name>
    <dbReference type="NCBI Taxonomy" id="83332"/>
    <lineage>
        <taxon>Bacteria</taxon>
        <taxon>Bacillati</taxon>
        <taxon>Actinomycetota</taxon>
        <taxon>Actinomycetes</taxon>
        <taxon>Mycobacteriales</taxon>
        <taxon>Mycobacteriaceae</taxon>
        <taxon>Mycobacterium</taxon>
        <taxon>Mycobacterium tuberculosis complex</taxon>
    </lineage>
</organism>
<keyword id="KW-0002">3D-structure</keyword>
<keyword id="KW-0067">ATP-binding</keyword>
<keyword id="KW-1003">Cell membrane</keyword>
<keyword id="KW-0472">Membrane</keyword>
<keyword id="KW-0547">Nucleotide-binding</keyword>
<keyword id="KW-0597">Phosphoprotein</keyword>
<keyword id="KW-1185">Reference proteome</keyword>
<keyword id="KW-0677">Repeat</keyword>
<keyword id="KW-1278">Translocase</keyword>
<keyword id="KW-0812">Transmembrane</keyword>
<keyword id="KW-1133">Transmembrane helix</keyword>
<keyword id="KW-0813">Transport</keyword>
<dbReference type="EC" id="7.-.-.-"/>
<dbReference type="EMBL" id="AL123456">
    <property type="protein sequence ID" value="CCP44513.1"/>
    <property type="molecule type" value="Genomic_DNA"/>
</dbReference>
<dbReference type="PIR" id="D70986">
    <property type="entry name" value="D70986"/>
</dbReference>
<dbReference type="RefSeq" id="NP_216263.1">
    <property type="nucleotide sequence ID" value="NC_000962.3"/>
</dbReference>
<dbReference type="RefSeq" id="WP_003408545.1">
    <property type="nucleotide sequence ID" value="NZ_NVQJ01000010.1"/>
</dbReference>
<dbReference type="PDB" id="6CAH">
    <property type="method" value="NMR"/>
    <property type="chains" value="A=207-310"/>
</dbReference>
<dbReference type="PDB" id="6CCD">
    <property type="method" value="X-ray"/>
    <property type="resolution" value="1.80 A"/>
    <property type="chains" value="A=3-113"/>
</dbReference>
<dbReference type="PDBsum" id="6CAH"/>
<dbReference type="PDBsum" id="6CCD"/>
<dbReference type="SMR" id="O65934"/>
<dbReference type="FunCoup" id="O65934">
    <property type="interactions" value="15"/>
</dbReference>
<dbReference type="STRING" id="83332.Rv1747"/>
<dbReference type="iPTMnet" id="O65934"/>
<dbReference type="PaxDb" id="83332-Rv1747"/>
<dbReference type="DNASU" id="885311"/>
<dbReference type="GeneID" id="885311"/>
<dbReference type="KEGG" id="mtu:Rv1747"/>
<dbReference type="KEGG" id="mtv:RVBD_1747"/>
<dbReference type="TubercuList" id="Rv1747"/>
<dbReference type="eggNOG" id="COG0842">
    <property type="taxonomic scope" value="Bacteria"/>
</dbReference>
<dbReference type="eggNOG" id="COG1131">
    <property type="taxonomic scope" value="Bacteria"/>
</dbReference>
<dbReference type="eggNOG" id="COG1716">
    <property type="taxonomic scope" value="Bacteria"/>
</dbReference>
<dbReference type="InParanoid" id="O65934"/>
<dbReference type="OrthoDB" id="9804819at2"/>
<dbReference type="PhylomeDB" id="O65934"/>
<dbReference type="CD-CODE" id="00EEF43C">
    <property type="entry name" value="Synthetic Condensate 000314"/>
</dbReference>
<dbReference type="CD-CODE" id="7C7190F1">
    <property type="entry name" value="ABC transporter condensate"/>
</dbReference>
<dbReference type="Proteomes" id="UP000001584">
    <property type="component" value="Chromosome"/>
</dbReference>
<dbReference type="GO" id="GO:0005829">
    <property type="term" value="C:cytosol"/>
    <property type="evidence" value="ECO:0007005"/>
    <property type="project" value="MTBBASE"/>
</dbReference>
<dbReference type="GO" id="GO:0016020">
    <property type="term" value="C:membrane"/>
    <property type="evidence" value="ECO:0000318"/>
    <property type="project" value="GO_Central"/>
</dbReference>
<dbReference type="GO" id="GO:0009274">
    <property type="term" value="C:peptidoglycan-based cell wall"/>
    <property type="evidence" value="ECO:0007005"/>
    <property type="project" value="MTBBASE"/>
</dbReference>
<dbReference type="GO" id="GO:0005886">
    <property type="term" value="C:plasma membrane"/>
    <property type="evidence" value="ECO:0007669"/>
    <property type="project" value="UniProtKB-SubCell"/>
</dbReference>
<dbReference type="GO" id="GO:0140359">
    <property type="term" value="F:ABC-type transporter activity"/>
    <property type="evidence" value="ECO:0007669"/>
    <property type="project" value="InterPro"/>
</dbReference>
<dbReference type="GO" id="GO:0005524">
    <property type="term" value="F:ATP binding"/>
    <property type="evidence" value="ECO:0007669"/>
    <property type="project" value="UniProtKB-KW"/>
</dbReference>
<dbReference type="GO" id="GO:0016887">
    <property type="term" value="F:ATP hydrolysis activity"/>
    <property type="evidence" value="ECO:0007669"/>
    <property type="project" value="InterPro"/>
</dbReference>
<dbReference type="GO" id="GO:0042626">
    <property type="term" value="F:ATPase-coupled transmembrane transporter activity"/>
    <property type="evidence" value="ECO:0000318"/>
    <property type="project" value="GO_Central"/>
</dbReference>
<dbReference type="GO" id="GO:0055085">
    <property type="term" value="P:transmembrane transport"/>
    <property type="evidence" value="ECO:0000318"/>
    <property type="project" value="GO_Central"/>
</dbReference>
<dbReference type="CDD" id="cd03213">
    <property type="entry name" value="ABCG_EPDR"/>
    <property type="match status" value="1"/>
</dbReference>
<dbReference type="CDD" id="cd22694">
    <property type="entry name" value="FHA_Rv1747-like_rpt1"/>
    <property type="match status" value="1"/>
</dbReference>
<dbReference type="CDD" id="cd22737">
    <property type="entry name" value="FHA_Rv1747-like_rpt2"/>
    <property type="match status" value="1"/>
</dbReference>
<dbReference type="DisProt" id="DP01947"/>
<dbReference type="FunFam" id="3.40.50.300:FF:000474">
    <property type="entry name" value="Putative ABC transporter ATP-binding subunit"/>
    <property type="match status" value="1"/>
</dbReference>
<dbReference type="Gene3D" id="2.60.200.20">
    <property type="match status" value="2"/>
</dbReference>
<dbReference type="Gene3D" id="3.40.50.300">
    <property type="entry name" value="P-loop containing nucleotide triphosphate hydrolases"/>
    <property type="match status" value="1"/>
</dbReference>
<dbReference type="InterPro" id="IPR003593">
    <property type="entry name" value="AAA+_ATPase"/>
</dbReference>
<dbReference type="InterPro" id="IPR013525">
    <property type="entry name" value="ABC2_TM"/>
</dbReference>
<dbReference type="InterPro" id="IPR003439">
    <property type="entry name" value="ABC_transporter-like_ATP-bd"/>
</dbReference>
<dbReference type="InterPro" id="IPR017871">
    <property type="entry name" value="ABC_transporter-like_CS"/>
</dbReference>
<dbReference type="InterPro" id="IPR050352">
    <property type="entry name" value="ABCG_transporters"/>
</dbReference>
<dbReference type="InterPro" id="IPR000253">
    <property type="entry name" value="FHA_dom"/>
</dbReference>
<dbReference type="InterPro" id="IPR027417">
    <property type="entry name" value="P-loop_NTPase"/>
</dbReference>
<dbReference type="InterPro" id="IPR008984">
    <property type="entry name" value="SMAD_FHA_dom_sf"/>
</dbReference>
<dbReference type="PANTHER" id="PTHR48041">
    <property type="entry name" value="ABC TRANSPORTER G FAMILY MEMBER 28"/>
    <property type="match status" value="1"/>
</dbReference>
<dbReference type="PANTHER" id="PTHR48041:SF139">
    <property type="entry name" value="PROTEIN SCARLET"/>
    <property type="match status" value="1"/>
</dbReference>
<dbReference type="Pfam" id="PF01061">
    <property type="entry name" value="ABC2_membrane"/>
    <property type="match status" value="1"/>
</dbReference>
<dbReference type="Pfam" id="PF00005">
    <property type="entry name" value="ABC_tran"/>
    <property type="match status" value="1"/>
</dbReference>
<dbReference type="Pfam" id="PF00498">
    <property type="entry name" value="FHA"/>
    <property type="match status" value="2"/>
</dbReference>
<dbReference type="SMART" id="SM00382">
    <property type="entry name" value="AAA"/>
    <property type="match status" value="1"/>
</dbReference>
<dbReference type="SMART" id="SM00240">
    <property type="entry name" value="FHA"/>
    <property type="match status" value="2"/>
</dbReference>
<dbReference type="SUPFAM" id="SSF52540">
    <property type="entry name" value="P-loop containing nucleoside triphosphate hydrolases"/>
    <property type="match status" value="1"/>
</dbReference>
<dbReference type="SUPFAM" id="SSF49879">
    <property type="entry name" value="SMAD/FHA domain"/>
    <property type="match status" value="2"/>
</dbReference>
<dbReference type="PROSITE" id="PS00211">
    <property type="entry name" value="ABC_TRANSPORTER_1"/>
    <property type="match status" value="1"/>
</dbReference>
<dbReference type="PROSITE" id="PS50893">
    <property type="entry name" value="ABC_TRANSPORTER_2"/>
    <property type="match status" value="1"/>
</dbReference>
<dbReference type="PROSITE" id="PS50006">
    <property type="entry name" value="FHA_DOMAIN"/>
    <property type="match status" value="2"/>
</dbReference>
<feature type="chain" id="PRO_0000419321" description="ABC transporter ATP-binding/permease protein Rv1747">
    <location>
        <begin position="1"/>
        <end position="865"/>
    </location>
</feature>
<feature type="transmembrane region" description="Helical" evidence="1">
    <location>
        <begin position="614"/>
        <end position="634"/>
    </location>
</feature>
<feature type="transmembrane region" description="Helical" evidence="1">
    <location>
        <begin position="652"/>
        <end position="672"/>
    </location>
</feature>
<feature type="transmembrane region" description="Helical" evidence="1">
    <location>
        <begin position="700"/>
        <end position="720"/>
    </location>
</feature>
<feature type="transmembrane region" description="Helical" evidence="1">
    <location>
        <begin position="740"/>
        <end position="760"/>
    </location>
</feature>
<feature type="transmembrane region" description="Helical" evidence="1">
    <location>
        <begin position="767"/>
        <end position="787"/>
    </location>
</feature>
<feature type="transmembrane region" description="Helical" evidence="1">
    <location>
        <begin position="836"/>
        <end position="856"/>
    </location>
</feature>
<feature type="domain" description="FHA 1" evidence="2">
    <location>
        <begin position="29"/>
        <end position="78"/>
    </location>
</feature>
<feature type="domain" description="FHA 2" evidence="2">
    <location>
        <begin position="230"/>
        <end position="279"/>
    </location>
</feature>
<feature type="domain" description="ABC transporter" evidence="3">
    <location>
        <begin position="319"/>
        <end position="552"/>
    </location>
</feature>
<feature type="domain" description="ABC transmembrane type-2">
    <location>
        <begin position="596"/>
        <end position="810"/>
    </location>
</feature>
<feature type="region of interest" description="Disordered" evidence="4">
    <location>
        <begin position="104"/>
        <end position="205"/>
    </location>
</feature>
<feature type="compositionally biased region" description="Low complexity" evidence="4">
    <location>
        <begin position="135"/>
        <end position="156"/>
    </location>
</feature>
<feature type="compositionally biased region" description="Pro residues" evidence="4">
    <location>
        <begin position="157"/>
        <end position="166"/>
    </location>
</feature>
<feature type="binding site" evidence="3">
    <location>
        <begin position="352"/>
        <end position="359"/>
    </location>
    <ligand>
        <name>ATP</name>
        <dbReference type="ChEBI" id="CHEBI:30616"/>
    </ligand>
</feature>
<feature type="modified residue" description="Phosphothreonine" evidence="8">
    <location>
        <position position="152"/>
    </location>
</feature>
<feature type="modified residue" description="Phosphothreonine" evidence="8">
    <location>
        <position position="210"/>
    </location>
</feature>
<feature type="mutagenesis site" description="Strong decrease in phosphorylation." evidence="5">
    <original>R</original>
    <variation>A</variation>
    <location>
        <position position="33"/>
    </location>
</feature>
<feature type="mutagenesis site" description="Strong decrease in phosphorylation. Lack of interaction with PknF. Attenuates growth in macrophages." evidence="5 7 8">
    <original>S</original>
    <variation>A</variation>
    <location>
        <position position="47"/>
    </location>
</feature>
<feature type="mutagenesis site" description="Strong decrease in phosphorylation." evidence="5">
    <original>N</original>
    <variation>A</variation>
    <location>
        <position position="69"/>
    </location>
</feature>
<feature type="mutagenesis site" description="Lack of phosphorylation. Attenuates growth in macrophages and in mice; when associated with A-210." evidence="8">
    <original>T</original>
    <variation>A</variation>
    <location>
        <position position="152"/>
    </location>
</feature>
<feature type="mutagenesis site" description="Lack of phosphorylation. Attenuates growth in macrophages and in mice; when associated with A-152." evidence="8">
    <original>T</original>
    <variation>A</variation>
    <location>
        <position position="210"/>
    </location>
</feature>
<feature type="mutagenesis site" description="Strong decrease in phosphorylation." evidence="5">
    <original>R</original>
    <variation>A</variation>
    <location>
        <position position="234"/>
    </location>
</feature>
<feature type="mutagenesis site" description="Strong decrease in phosphorylation. Decreases interaction with PknF." evidence="5 7 8">
    <original>S</original>
    <variation>A</variation>
    <location>
        <position position="248"/>
    </location>
</feature>
<feature type="mutagenesis site" description="Strong decrease in phosphorylation." evidence="5">
    <original>N</original>
    <variation>A</variation>
    <location>
        <position position="270"/>
    </location>
</feature>
<feature type="mutagenesis site" description="Loss of ATPase activity." evidence="5">
    <original>E</original>
    <variation>Q</variation>
    <location>
        <position position="479"/>
    </location>
</feature>
<feature type="strand" evidence="11">
    <location>
        <begin position="12"/>
        <end position="16"/>
    </location>
</feature>
<feature type="strand" evidence="11">
    <location>
        <begin position="19"/>
        <end position="23"/>
    </location>
</feature>
<feature type="strand" evidence="11">
    <location>
        <begin position="29"/>
        <end position="33"/>
    </location>
</feature>
<feature type="strand" evidence="11">
    <location>
        <begin position="38"/>
        <end position="40"/>
    </location>
</feature>
<feature type="strand" evidence="11">
    <location>
        <begin position="51"/>
        <end position="56"/>
    </location>
</feature>
<feature type="strand" evidence="11">
    <location>
        <begin position="59"/>
        <end position="64"/>
    </location>
</feature>
<feature type="strand" evidence="11">
    <location>
        <begin position="71"/>
        <end position="73"/>
    </location>
</feature>
<feature type="strand" evidence="11">
    <location>
        <begin position="79"/>
        <end position="93"/>
    </location>
</feature>
<feature type="strand" evidence="11">
    <location>
        <begin position="98"/>
        <end position="103"/>
    </location>
</feature>
<feature type="strand" evidence="10">
    <location>
        <begin position="228"/>
        <end position="235"/>
    </location>
</feature>
<feature type="strand" evidence="10">
    <location>
        <begin position="238"/>
        <end position="241"/>
    </location>
</feature>
<feature type="strand" evidence="10">
    <location>
        <begin position="252"/>
        <end position="257"/>
    </location>
</feature>
<feature type="strand" evidence="10">
    <location>
        <begin position="260"/>
        <end position="265"/>
    </location>
</feature>
<feature type="turn" evidence="10">
    <location>
        <begin position="267"/>
        <end position="270"/>
    </location>
</feature>
<feature type="strand" evidence="10">
    <location>
        <begin position="280"/>
        <end position="284"/>
    </location>
</feature>
<feature type="strand" evidence="10">
    <location>
        <begin position="289"/>
        <end position="292"/>
    </location>
</feature>
<feature type="strand" evidence="10">
    <location>
        <begin position="295"/>
        <end position="300"/>
    </location>
</feature>
<feature type="strand" evidence="10">
    <location>
        <begin position="303"/>
        <end position="306"/>
    </location>
</feature>
<sequence length="865" mass="92153">MPMSQPAAPPVLTVRYEGSERTFAAGHDVVVGRDLRADVRVAHPLISRAHLLLRFDQGRWVAIDNGSLNGLYLNNRRVPVVDIYDAQRVHIGNPDGPALDFEVGRHRGSAGRPPQTTSIRLPNLSAGAWPTDGPPQTGTLGSGQLQQLPPATTRIPAAPPSGPQPRYPTGGQQLWPPSGPQRAPQIYRPPTAAPPPAGARGGTEAGNLATSMMKILRPGRLTGELPPGAVRIGRANDNDIVIPEVLASRHHATLVPTPGGTEIRDNRSINGTFVNGARVDAALLHDGDVVTIGNIDLVFADGTLARREENLLETRVGGLDVRGVTWTIDGDKTLLDGISLTARPGMLTAVIGPSGAGKSTLARLVAGYTHPTDGTVTFEGHNVHAEYASLRSRIGMVPQDDVVHGQLTVKHALMYAAELRLPPDTTKDDRTQVVARVLEELEMSKHIDTRVDKLSGGQRKRASVALELLTGPSLLILDEPTSGLDPALDRQVMTMLRQLADAGRVVLVVTHSLTYLDVCDQVLLLAPGGKTAFCGPPTQIGPVMGTTNWADIFSTVADDPDAAKARYLARTGPTPPPPPVEQPAELGDPAHTSLFRQFSTIARRQLRLIVSDRGYFVFLALLPFIMGALSMSVPGDVGFGFPNPMGDAPNEPGQILVLLNVGAVFMGTALTIRDLIGERAIFRREQAVGLSTTAYLIAKVCVYTVLAVVQSAIVTVIVLVGKGGPTQGAVALSKPDLELFVDVAVTCVASAMLGLALSAIAKSNEQIMPLLVVAVMSQLVFSGGMIPVTGRVPLDQMSWVTPARWGFAASAATVDLIKLVPGPLTPKDSHWHHTASAWWFDMAMLVALSVIYVGFVRWKIRLKAC</sequence>